<evidence type="ECO:0000250" key="1"/>
<evidence type="ECO:0000305" key="2"/>
<evidence type="ECO:0000312" key="3">
    <source>
        <dbReference type="WormBase" id="CBG06228a"/>
    </source>
</evidence>
<sequence length="1645" mass="181499">MSINAVDSKKLVEALLGDLRLLSQEAKKKQNHVKESAETGVVRIRNISTASVGDTVLITNLRAACTELLHPLVLACETRHTRLVQIALQGIQRLVQHRILSGNGATIVTNELWALVEAECEELRVLQTVPPLVSSELIVTGNTLAKCVVMCFRLHFAKDPIVINAASAAVRQLVSTVFERVIQEDGIFSSELTVVNPSGGRPSPRAAPPTLRPCAADAYMLFKDLCLLINGEAPTWLVGIQEMTRTLGLELLESLLKGYPSVFIRHTEFGDLLKDDVCPLIIRLFSPNVKAMHINSQHPSSRISNASMSNYPPTVSHDRQSFPISMRLVRIVTLLVQFYQNILHTECEIFISTLLKFVDGDRKGWQRPLALESLHRIISSTDLVKWMTESFDCRPNSTHVLEQVAVELSVVVQQCLVCTTFSSDQDNELDRSQEDGGPGFLVKGLWVPYVEHLTSKKTILLDSLDRMDAVAISEGYVLSRCCVALCDLTQAVYAVIDRLCVLDENCEAGSSEENLRIAKVAYANTQPSILAAIGSLLAASTDEIVSDQLLCCLSTLISAGCRVGADQDLHRSVYVLAIMSLPSPSYLNQFAGIPPPSPVSKREVSISEQVFDLESWPSTAQVTATGPPCPCPVVSTDLWNKQVLLTSKNLQAARTFIASITTHIKELNGLWYLCMATCEHLSWLLAMRPTQIGQFERETRDDHSNGPTVVTNAALGDIGMLSSLMDKVAPAIAALPNEEFLLVVDALIRLSDESLAVAATGRDSSLFPLAVLYRVCSLSLSGINVFWAKVANHFIKVCNHTSVSMRDWAAVALTSLAKHAIKSKTSMDPKSQQEMVIASLLALCSIPHIQVRRRQLDCVMSLMQTDGSSLLSTSWPNVIQIISSIIDNDTGCELSLVRQGYLGLRLVSSDFLQSIPFDCISGLVEAISRYSKQNTDQNISLSALTLLWTISDFIYRKMESVGNDASEAVWMVLYTCLSESCVDTRFAVRKSACQTLLQTVTAHGHALRAPAWHHVIWQIIIPLLDKVRSQTRCASTEKSNGELIMHHSRDTEQKQWTETCIHTLSAISKIFNSQRKSLLALNDFGAVWEAFLGYLDWAACYENAELSLSAIRSYQEVLLGKISSQTLNVNSHEKSNGSESTLDTVAPELPQAQWVESWKVWLRISRGLARQGCAAVANSVNADTKSTSSTPRMNSSTSSLTSLAPGVYVPGPSHLTAILHIFPPLFDKVAKCITVDDLKYESLPAVLESMMNVPIPSEQAPFVLPSSTTHLTPTQEALLEAVKIVYVECTISGTTLRTAIPDQIRLLLKFASMATQRISPNKVAPGGQKSYRDYALTAIVPFSEYSLRIAIEFFTSTSQYPDVSNSLIAINIIKFLGEPLYMKYTCISASTWKLAASSLMSVLRTSIPYARQNPEVFRSLWSTICDTMERWLFTPNKSSRLAADERKRDELMECQAIEIIRNEMLAYASRLPQEDVQRLISLLHRGSISQIDSTDVLDSHTQRNELAKACFDALLMSTDGAQAGAEEDDHRGILGNVAVTSLLQRCTQVMADFCKDWSAAGDLRLPRSRILEIISALQAIDSLIARLARDPRMTELYSQLVSLFPSVVDVMPCCHADGQLEQQLIKTIKSYQTLFLLQNIPQSTV</sequence>
<dbReference type="EMBL" id="HE600986">
    <property type="protein sequence ID" value="CAP26173.3"/>
    <property type="molecule type" value="Genomic_DNA"/>
</dbReference>
<dbReference type="RefSeq" id="XP_002633460.1">
    <property type="nucleotide sequence ID" value="XM_002633414.1"/>
</dbReference>
<dbReference type="SMR" id="Q61SD1"/>
<dbReference type="FunCoup" id="Q61SD1">
    <property type="interactions" value="2820"/>
</dbReference>
<dbReference type="STRING" id="6238.Q61SD1"/>
<dbReference type="EnsemblMetazoa" id="CBG06228a.1">
    <property type="protein sequence ID" value="CBG06228a.1"/>
    <property type="gene ID" value="WBGene00028535"/>
</dbReference>
<dbReference type="GeneID" id="8575457"/>
<dbReference type="KEGG" id="cbr:CBG_06228"/>
<dbReference type="CTD" id="8575457"/>
<dbReference type="WormBase" id="CBG06228a">
    <property type="protein sequence ID" value="CBP01510"/>
    <property type="gene ID" value="WBGene00028535"/>
    <property type="gene designation" value="Cbr-mon-2"/>
</dbReference>
<dbReference type="eggNOG" id="KOG1848">
    <property type="taxonomic scope" value="Eukaryota"/>
</dbReference>
<dbReference type="HOGENOM" id="CLU_001169_2_0_1"/>
<dbReference type="InParanoid" id="Q61SD1"/>
<dbReference type="OMA" id="AWRLCLN"/>
<dbReference type="Proteomes" id="UP000008549">
    <property type="component" value="Unassembled WGS sequence"/>
</dbReference>
<dbReference type="GO" id="GO:0015031">
    <property type="term" value="P:protein transport"/>
    <property type="evidence" value="ECO:0007669"/>
    <property type="project" value="UniProtKB-KW"/>
</dbReference>
<dbReference type="InterPro" id="IPR016024">
    <property type="entry name" value="ARM-type_fold"/>
</dbReference>
<dbReference type="InterPro" id="IPR032629">
    <property type="entry name" value="DCB_dom"/>
</dbReference>
<dbReference type="InterPro" id="IPR032691">
    <property type="entry name" value="Mon2/Sec7/BIG1-like_HUS"/>
</dbReference>
<dbReference type="InterPro" id="IPR032817">
    <property type="entry name" value="Mon2_C"/>
</dbReference>
<dbReference type="PANTHER" id="PTHR10663">
    <property type="entry name" value="GUANYL-NUCLEOTIDE EXCHANGE FACTOR"/>
    <property type="match status" value="1"/>
</dbReference>
<dbReference type="PANTHER" id="PTHR10663:SF333">
    <property type="entry name" value="PROTEIN MON2 HOMOLOG"/>
    <property type="match status" value="1"/>
</dbReference>
<dbReference type="Pfam" id="PF16213">
    <property type="entry name" value="DCB"/>
    <property type="match status" value="1"/>
</dbReference>
<dbReference type="Pfam" id="PF16206">
    <property type="entry name" value="Mon2_C"/>
    <property type="match status" value="2"/>
</dbReference>
<dbReference type="Pfam" id="PF12783">
    <property type="entry name" value="Sec7-like_HUS"/>
    <property type="match status" value="2"/>
</dbReference>
<dbReference type="SUPFAM" id="SSF48371">
    <property type="entry name" value="ARM repeat"/>
    <property type="match status" value="1"/>
</dbReference>
<organism>
    <name type="scientific">Caenorhabditis briggsae</name>
    <dbReference type="NCBI Taxonomy" id="6238"/>
    <lineage>
        <taxon>Eukaryota</taxon>
        <taxon>Metazoa</taxon>
        <taxon>Ecdysozoa</taxon>
        <taxon>Nematoda</taxon>
        <taxon>Chromadorea</taxon>
        <taxon>Rhabditida</taxon>
        <taxon>Rhabditina</taxon>
        <taxon>Rhabditomorpha</taxon>
        <taxon>Rhabditoidea</taxon>
        <taxon>Rhabditidae</taxon>
        <taxon>Peloderinae</taxon>
        <taxon>Caenorhabditis</taxon>
    </lineage>
</organism>
<gene>
    <name evidence="3" type="primary">mon-2</name>
    <name type="ORF">CBG06228</name>
</gene>
<feature type="chain" id="PRO_0000297905" description="Protein MON2 homolog">
    <location>
        <begin position="1"/>
        <end position="1645"/>
    </location>
</feature>
<reference key="1">
    <citation type="journal article" date="2003" name="PLoS Biol.">
        <title>The genome sequence of Caenorhabditis briggsae: a platform for comparative genomics.</title>
        <authorList>
            <person name="Stein L.D."/>
            <person name="Bao Z."/>
            <person name="Blasiar D."/>
            <person name="Blumenthal T."/>
            <person name="Brent M.R."/>
            <person name="Chen N."/>
            <person name="Chinwalla A."/>
            <person name="Clarke L."/>
            <person name="Clee C."/>
            <person name="Coghlan A."/>
            <person name="Coulson A."/>
            <person name="D'Eustachio P."/>
            <person name="Fitch D.H.A."/>
            <person name="Fulton L.A."/>
            <person name="Fulton R.E."/>
            <person name="Griffiths-Jones S."/>
            <person name="Harris T.W."/>
            <person name="Hillier L.W."/>
            <person name="Kamath R."/>
            <person name="Kuwabara P.E."/>
            <person name="Mardis E.R."/>
            <person name="Marra M.A."/>
            <person name="Miner T.L."/>
            <person name="Minx P."/>
            <person name="Mullikin J.C."/>
            <person name="Plumb R.W."/>
            <person name="Rogers J."/>
            <person name="Schein J.E."/>
            <person name="Sohrmann M."/>
            <person name="Spieth J."/>
            <person name="Stajich J.E."/>
            <person name="Wei C."/>
            <person name="Willey D."/>
            <person name="Wilson R.K."/>
            <person name="Durbin R.M."/>
            <person name="Waterston R.H."/>
        </authorList>
    </citation>
    <scope>NUCLEOTIDE SEQUENCE [LARGE SCALE GENOMIC DNA]</scope>
    <source>
        <strain>AF16</strain>
    </source>
</reference>
<accession>Q61SD1</accession>
<accession>A8X0L3</accession>
<proteinExistence type="inferred from homology"/>
<comment type="function">
    <text evidence="1">May be required for traffic between late Golgi and early endosomes.</text>
</comment>
<comment type="similarity">
    <text evidence="2">Belongs to the MON2 family.</text>
</comment>
<name>MON2_CAEBR</name>
<keyword id="KW-0653">Protein transport</keyword>
<keyword id="KW-1185">Reference proteome</keyword>
<keyword id="KW-0813">Transport</keyword>
<protein>
    <recommendedName>
        <fullName>Protein MON2 homolog</fullName>
    </recommendedName>
</protein>